<proteinExistence type="inferred from homology"/>
<reference key="1">
    <citation type="journal article" date="1996" name="Science">
        <title>Complete genome sequence of the methanogenic archaeon, Methanococcus jannaschii.</title>
        <authorList>
            <person name="Bult C.J."/>
            <person name="White O."/>
            <person name="Olsen G.J."/>
            <person name="Zhou L."/>
            <person name="Fleischmann R.D."/>
            <person name="Sutton G.G."/>
            <person name="Blake J.A."/>
            <person name="FitzGerald L.M."/>
            <person name="Clayton R.A."/>
            <person name="Gocayne J.D."/>
            <person name="Kerlavage A.R."/>
            <person name="Dougherty B.A."/>
            <person name="Tomb J.-F."/>
            <person name="Adams M.D."/>
            <person name="Reich C.I."/>
            <person name="Overbeek R."/>
            <person name="Kirkness E.F."/>
            <person name="Weinstock K.G."/>
            <person name="Merrick J.M."/>
            <person name="Glodek A."/>
            <person name="Scott J.L."/>
            <person name="Geoghagen N.S.M."/>
            <person name="Weidman J.F."/>
            <person name="Fuhrmann J.L."/>
            <person name="Nguyen D."/>
            <person name="Utterback T.R."/>
            <person name="Kelley J.M."/>
            <person name="Peterson J.D."/>
            <person name="Sadow P.W."/>
            <person name="Hanna M.C."/>
            <person name="Cotton M.D."/>
            <person name="Roberts K.M."/>
            <person name="Hurst M.A."/>
            <person name="Kaine B.P."/>
            <person name="Borodovsky M."/>
            <person name="Klenk H.-P."/>
            <person name="Fraser C.M."/>
            <person name="Smith H.O."/>
            <person name="Woese C.R."/>
            <person name="Venter J.C."/>
        </authorList>
    </citation>
    <scope>NUCLEOTIDE SEQUENCE [LARGE SCALE GENOMIC DNA]</scope>
    <source>
        <strain>ATCC 43067 / DSM 2661 / JAL-1 / JCM 10045 / NBRC 100440</strain>
    </source>
</reference>
<dbReference type="EMBL" id="L77117">
    <property type="protein sequence ID" value="AAB98174.1"/>
    <property type="molecule type" value="Genomic_DNA"/>
</dbReference>
<dbReference type="RefSeq" id="WP_010869689.1">
    <property type="nucleotide sequence ID" value="NC_000909.1"/>
</dbReference>
<dbReference type="SMR" id="P54023"/>
<dbReference type="FunCoup" id="P54023">
    <property type="interactions" value="161"/>
</dbReference>
<dbReference type="STRING" id="243232.MJ_0194"/>
<dbReference type="PaxDb" id="243232-MJ_0194"/>
<dbReference type="EnsemblBacteria" id="AAB98174">
    <property type="protein sequence ID" value="AAB98174"/>
    <property type="gene ID" value="MJ_0194"/>
</dbReference>
<dbReference type="GeneID" id="1451042"/>
<dbReference type="KEGG" id="mja:MJ_0194"/>
<dbReference type="eggNOG" id="arCOG04242">
    <property type="taxonomic scope" value="Archaea"/>
</dbReference>
<dbReference type="HOGENOM" id="CLU_076922_1_0_2"/>
<dbReference type="InParanoid" id="P54023"/>
<dbReference type="OrthoDB" id="7668at2157"/>
<dbReference type="PhylomeDB" id="P54023"/>
<dbReference type="Proteomes" id="UP000000805">
    <property type="component" value="Chromosome"/>
</dbReference>
<dbReference type="GO" id="GO:0022625">
    <property type="term" value="C:cytosolic large ribosomal subunit"/>
    <property type="evidence" value="ECO:0000318"/>
    <property type="project" value="GO_Central"/>
</dbReference>
<dbReference type="GO" id="GO:0005840">
    <property type="term" value="C:ribosome"/>
    <property type="evidence" value="ECO:0000318"/>
    <property type="project" value="GO_Central"/>
</dbReference>
<dbReference type="GO" id="GO:0003729">
    <property type="term" value="F:mRNA binding"/>
    <property type="evidence" value="ECO:0000318"/>
    <property type="project" value="GO_Central"/>
</dbReference>
<dbReference type="GO" id="GO:0003735">
    <property type="term" value="F:structural constituent of ribosome"/>
    <property type="evidence" value="ECO:0000318"/>
    <property type="project" value="GO_Central"/>
</dbReference>
<dbReference type="GO" id="GO:0017148">
    <property type="term" value="P:negative regulation of translation"/>
    <property type="evidence" value="ECO:0000318"/>
    <property type="project" value="GO_Central"/>
</dbReference>
<dbReference type="GO" id="GO:0006412">
    <property type="term" value="P:translation"/>
    <property type="evidence" value="ECO:0007669"/>
    <property type="project" value="UniProtKB-UniRule"/>
</dbReference>
<dbReference type="CDD" id="cd00392">
    <property type="entry name" value="Ribosomal_L13"/>
    <property type="match status" value="1"/>
</dbReference>
<dbReference type="FunFam" id="3.90.1180.10:FF:000012">
    <property type="entry name" value="50S ribosomal protein L13"/>
    <property type="match status" value="1"/>
</dbReference>
<dbReference type="Gene3D" id="3.90.1180.10">
    <property type="entry name" value="Ribosomal protein L13"/>
    <property type="match status" value="1"/>
</dbReference>
<dbReference type="HAMAP" id="MF_01366">
    <property type="entry name" value="Ribosomal_uL13"/>
    <property type="match status" value="1"/>
</dbReference>
<dbReference type="InterPro" id="IPR005822">
    <property type="entry name" value="Ribosomal_uL13"/>
</dbReference>
<dbReference type="InterPro" id="IPR005823">
    <property type="entry name" value="Ribosomal_uL13_bac-type"/>
</dbReference>
<dbReference type="InterPro" id="IPR023563">
    <property type="entry name" value="Ribosomal_uL13_CS"/>
</dbReference>
<dbReference type="InterPro" id="IPR005755">
    <property type="entry name" value="Ribosomal_uL13_euk/arc"/>
</dbReference>
<dbReference type="InterPro" id="IPR036899">
    <property type="entry name" value="Ribosomal_uL13_sf"/>
</dbReference>
<dbReference type="NCBIfam" id="TIGR01077">
    <property type="entry name" value="L13_A_E"/>
    <property type="match status" value="1"/>
</dbReference>
<dbReference type="NCBIfam" id="NF005004">
    <property type="entry name" value="PRK06394.1"/>
    <property type="match status" value="1"/>
</dbReference>
<dbReference type="PANTHER" id="PTHR11545:SF3">
    <property type="entry name" value="LARGE RIBOSOMAL SUBUNIT PROTEIN UL13"/>
    <property type="match status" value="1"/>
</dbReference>
<dbReference type="PANTHER" id="PTHR11545">
    <property type="entry name" value="RIBOSOMAL PROTEIN L13"/>
    <property type="match status" value="1"/>
</dbReference>
<dbReference type="Pfam" id="PF00572">
    <property type="entry name" value="Ribosomal_L13"/>
    <property type="match status" value="1"/>
</dbReference>
<dbReference type="PIRSF" id="PIRSF002181">
    <property type="entry name" value="Ribosomal_L13"/>
    <property type="match status" value="1"/>
</dbReference>
<dbReference type="SUPFAM" id="SSF52161">
    <property type="entry name" value="Ribosomal protein L13"/>
    <property type="match status" value="1"/>
</dbReference>
<dbReference type="PROSITE" id="PS00783">
    <property type="entry name" value="RIBOSOMAL_L13"/>
    <property type="match status" value="1"/>
</dbReference>
<accession>P54023</accession>
<keyword id="KW-1185">Reference proteome</keyword>
<keyword id="KW-0687">Ribonucleoprotein</keyword>
<keyword id="KW-0689">Ribosomal protein</keyword>
<organism>
    <name type="scientific">Methanocaldococcus jannaschii (strain ATCC 43067 / DSM 2661 / JAL-1 / JCM 10045 / NBRC 100440)</name>
    <name type="common">Methanococcus jannaschii</name>
    <dbReference type="NCBI Taxonomy" id="243232"/>
    <lineage>
        <taxon>Archaea</taxon>
        <taxon>Methanobacteriati</taxon>
        <taxon>Methanobacteriota</taxon>
        <taxon>Methanomada group</taxon>
        <taxon>Methanococci</taxon>
        <taxon>Methanococcales</taxon>
        <taxon>Methanocaldococcaceae</taxon>
        <taxon>Methanocaldococcus</taxon>
    </lineage>
</organism>
<name>RL13_METJA</name>
<protein>
    <recommendedName>
        <fullName evidence="1">Large ribosomal subunit protein uL13</fullName>
    </recommendedName>
    <alternativeName>
        <fullName evidence="2">50S ribosomal protein L13</fullName>
    </alternativeName>
</protein>
<sequence>MTVIDAEGAILGRLASEVAKRVLRGEEIVIVNAEMVVITGNKDWIIKTYQEEREKKNVANPRRFGPKFPRRPDDILRRTIRKMLPYKKPKGREAFKRVKVYVGNPKNLTVDEKISHKLNTTKYITLAELSKHLGAKF</sequence>
<feature type="chain" id="PRO_0000133760" description="Large ribosomal subunit protein uL13">
    <location>
        <begin position="1"/>
        <end position="137"/>
    </location>
</feature>
<evidence type="ECO:0000255" key="1">
    <source>
        <dbReference type="HAMAP-Rule" id="MF_01366"/>
    </source>
</evidence>
<evidence type="ECO:0000305" key="2"/>
<comment type="function">
    <text evidence="1">This protein is one of the early assembly proteins of the 50S ribosomal subunit, although it is not seen to bind rRNA by itself. It is important during the early stages of 50S assembly.</text>
</comment>
<comment type="subunit">
    <text evidence="1">Part of the 50S ribosomal subunit.</text>
</comment>
<comment type="similarity">
    <text evidence="1">Belongs to the universal ribosomal protein uL13 family.</text>
</comment>
<gene>
    <name evidence="1" type="primary">rpl13</name>
    <name type="ordered locus">MJ0194</name>
</gene>